<reference key="1">
    <citation type="submission" date="2004-11" db="EMBL/GenBank/DDBJ databases">
        <authorList>
            <consortium name="The German cDNA consortium"/>
        </authorList>
    </citation>
    <scope>NUCLEOTIDE SEQUENCE [LARGE SCALE MRNA]</scope>
    <source>
        <tissue>Kidney</tissue>
    </source>
</reference>
<protein>
    <recommendedName>
        <fullName evidence="4">ATP synthase F(0) complex subunit C2, mitochondrial</fullName>
    </recommendedName>
    <alternativeName>
        <fullName>ATP synthase lipid-binding protein</fullName>
    </alternativeName>
    <alternativeName>
        <fullName evidence="2">ATP synthase membrane subunit c locus 2</fullName>
    </alternativeName>
    <alternativeName>
        <fullName>ATP synthase proteolipid P2</fullName>
    </alternativeName>
    <alternativeName>
        <fullName>ATPase protein 9</fullName>
    </alternativeName>
    <alternativeName>
        <fullName>ATPase subunit c</fullName>
    </alternativeName>
</protein>
<proteinExistence type="evidence at transcript level"/>
<name>AT5G2_PONAB</name>
<comment type="function">
    <text>Mitochondrial membrane ATP synthase (F(1)F(0) ATP synthase or Complex V) produces ATP from ADP in the presence of a proton gradient across the membrane which is generated by electron transport complexes of the respiratory chain. F-type ATPases consist of two structural domains, F(1) - containing the extramembraneous catalytic core and F(0) - containing the membrane proton channel, linked together by a central stalk and a peripheral stalk. During catalysis, ATP synthesis in the catalytic domain of F(1) is coupled via a rotary mechanism of the central stalk subunits to proton translocation. Part of the complex F(0) domain. A homomeric c-ring of probably 10 subunits is part of the complex rotary element.</text>
</comment>
<comment type="subunit">
    <text evidence="2">F-type ATPases have 2 components, CF(1) - the catalytic core - and CF(0) - the membrane proton channel. CF(1) has five subunits: alpha(3), beta(3), gamma(1), delta(1), epsilon(1). CF(0) has three main subunits: a, b and c. Interacts with DNAJC30; interaction is direct.</text>
</comment>
<comment type="subcellular location">
    <subcellularLocation>
        <location evidence="1">Mitochondrion membrane</location>
        <topology evidence="1">Multi-pass membrane protein</topology>
    </subcellularLocation>
</comment>
<comment type="PTM">
    <text evidence="2">Trimethylated by ATPSCKMT at Lys-109. Methylation is required for proper incorporation of the C subunit into the ATP synthase complex and mitochondrial respiration.</text>
</comment>
<comment type="disease">
    <text>This protein is the major protein stored in the storage bodies of animals or humans affected with ceroid lipofuscinosis (Batten disease).</text>
</comment>
<comment type="miscellaneous">
    <text evidence="4">There are three genes which encode the mitochondrial ATP synthase proteolipid and they specify precursors with different import sequences but identical mature proteins.</text>
</comment>
<comment type="similarity">
    <text evidence="4">Belongs to the ATPase C chain family.</text>
</comment>
<gene>
    <name evidence="2" type="primary">ATP5MC2</name>
    <name type="synonym">ATP5G2</name>
</gene>
<evidence type="ECO:0000250" key="1"/>
<evidence type="ECO:0000250" key="2">
    <source>
        <dbReference type="UniProtKB" id="Q06055"/>
    </source>
</evidence>
<evidence type="ECO:0000255" key="3"/>
<evidence type="ECO:0000305" key="4"/>
<sequence length="141" mass="14807">MFSCFKFISTPSLVKSTSQLLSRPLSAVVLKRPEILTDESLSSLAVSRPLTSLVSSRNFQTSAISRDIDTAAKFIGAGAATVGVAGSGAGIGTVFGSLIIGYARNPSLKQQLFSYAILGFALSEAMGLFCLMVAFLILFAM</sequence>
<dbReference type="EMBL" id="CR858965">
    <property type="protein sequence ID" value="CAH91161.1"/>
    <property type="molecule type" value="mRNA"/>
</dbReference>
<dbReference type="RefSeq" id="NP_001125678.1">
    <property type="nucleotide sequence ID" value="NM_001132206.2"/>
</dbReference>
<dbReference type="SMR" id="Q5RAP9"/>
<dbReference type="FunCoup" id="Q5RAP9">
    <property type="interactions" value="505"/>
</dbReference>
<dbReference type="STRING" id="9601.ENSPPYP00000005231"/>
<dbReference type="GeneID" id="100172599"/>
<dbReference type="KEGG" id="pon:100172599"/>
<dbReference type="CTD" id="517"/>
<dbReference type="eggNOG" id="KOG3025">
    <property type="taxonomic scope" value="Eukaryota"/>
</dbReference>
<dbReference type="InParanoid" id="Q5RAP9"/>
<dbReference type="OrthoDB" id="438052at2759"/>
<dbReference type="Proteomes" id="UP000001595">
    <property type="component" value="Unplaced"/>
</dbReference>
<dbReference type="GO" id="GO:0031966">
    <property type="term" value="C:mitochondrial membrane"/>
    <property type="evidence" value="ECO:0007669"/>
    <property type="project" value="UniProtKB-SubCell"/>
</dbReference>
<dbReference type="GO" id="GO:0045259">
    <property type="term" value="C:proton-transporting ATP synthase complex"/>
    <property type="evidence" value="ECO:0007669"/>
    <property type="project" value="UniProtKB-KW"/>
</dbReference>
<dbReference type="GO" id="GO:0033177">
    <property type="term" value="C:proton-transporting two-sector ATPase complex, proton-transporting domain"/>
    <property type="evidence" value="ECO:0007669"/>
    <property type="project" value="InterPro"/>
</dbReference>
<dbReference type="GO" id="GO:0008289">
    <property type="term" value="F:lipid binding"/>
    <property type="evidence" value="ECO:0007669"/>
    <property type="project" value="UniProtKB-KW"/>
</dbReference>
<dbReference type="GO" id="GO:0015078">
    <property type="term" value="F:proton transmembrane transporter activity"/>
    <property type="evidence" value="ECO:0007669"/>
    <property type="project" value="InterPro"/>
</dbReference>
<dbReference type="GO" id="GO:0015986">
    <property type="term" value="P:proton motive force-driven ATP synthesis"/>
    <property type="evidence" value="ECO:0007669"/>
    <property type="project" value="InterPro"/>
</dbReference>
<dbReference type="CDD" id="cd18182">
    <property type="entry name" value="ATP-synt_Fo_c_ATP5G3"/>
    <property type="match status" value="1"/>
</dbReference>
<dbReference type="FunFam" id="1.20.20.10:FF:000003">
    <property type="entry name" value="Atp synthase f complex subunit mitochondrial"/>
    <property type="match status" value="1"/>
</dbReference>
<dbReference type="Gene3D" id="1.20.20.10">
    <property type="entry name" value="F1F0 ATP synthase subunit C"/>
    <property type="match status" value="1"/>
</dbReference>
<dbReference type="HAMAP" id="MF_01396">
    <property type="entry name" value="ATP_synth_c_bact"/>
    <property type="match status" value="1"/>
</dbReference>
<dbReference type="InterPro" id="IPR000454">
    <property type="entry name" value="ATP_synth_F0_csu"/>
</dbReference>
<dbReference type="InterPro" id="IPR020537">
    <property type="entry name" value="ATP_synth_F0_csu_DDCD_BS"/>
</dbReference>
<dbReference type="InterPro" id="IPR038662">
    <property type="entry name" value="ATP_synth_F0_csu_sf"/>
</dbReference>
<dbReference type="InterPro" id="IPR002379">
    <property type="entry name" value="ATPase_proteolipid_c-like_dom"/>
</dbReference>
<dbReference type="InterPro" id="IPR035921">
    <property type="entry name" value="F/V-ATP_Csub_sf"/>
</dbReference>
<dbReference type="PANTHER" id="PTHR10031:SF56">
    <property type="entry name" value="ATP SYNTHASE F(0) COMPLEX SUBUNIT C1, MITOCHONDRIAL"/>
    <property type="match status" value="1"/>
</dbReference>
<dbReference type="PANTHER" id="PTHR10031">
    <property type="entry name" value="ATP SYNTHASE LIPID-BINDING PROTEIN, MITOCHONDRIAL"/>
    <property type="match status" value="1"/>
</dbReference>
<dbReference type="Pfam" id="PF00137">
    <property type="entry name" value="ATP-synt_C"/>
    <property type="match status" value="1"/>
</dbReference>
<dbReference type="PRINTS" id="PR00124">
    <property type="entry name" value="ATPASEC"/>
</dbReference>
<dbReference type="SUPFAM" id="SSF81333">
    <property type="entry name" value="F1F0 ATP synthase subunit C"/>
    <property type="match status" value="1"/>
</dbReference>
<dbReference type="PROSITE" id="PS00605">
    <property type="entry name" value="ATPASE_C"/>
    <property type="match status" value="1"/>
</dbReference>
<keyword id="KW-0138">CF(0)</keyword>
<keyword id="KW-0375">Hydrogen ion transport</keyword>
<keyword id="KW-0406">Ion transport</keyword>
<keyword id="KW-0446">Lipid-binding</keyword>
<keyword id="KW-0472">Membrane</keyword>
<keyword id="KW-0488">Methylation</keyword>
<keyword id="KW-0496">Mitochondrion</keyword>
<keyword id="KW-1185">Reference proteome</keyword>
<keyword id="KW-0809">Transit peptide</keyword>
<keyword id="KW-0812">Transmembrane</keyword>
<keyword id="KW-1133">Transmembrane helix</keyword>
<keyword id="KW-0813">Transport</keyword>
<feature type="transit peptide" description="Mitochondrion" evidence="1">
    <location>
        <begin position="1"/>
        <end position="66"/>
    </location>
</feature>
<feature type="chain" id="PRO_0000002564" description="ATP synthase F(0) complex subunit C2, mitochondrial">
    <location>
        <begin position="67"/>
        <end position="141"/>
    </location>
</feature>
<feature type="transmembrane region" description="Helical" evidence="3">
    <location>
        <begin position="82"/>
        <end position="102"/>
    </location>
</feature>
<feature type="transmembrane region" description="Helical" evidence="3">
    <location>
        <begin position="117"/>
        <end position="137"/>
    </location>
</feature>
<feature type="site" description="Reversibly protonated during proton transport" evidence="1">
    <location>
        <position position="124"/>
    </location>
</feature>
<feature type="modified residue" description="N6,N6,N6-trimethyllysine" evidence="2">
    <location>
        <position position="109"/>
    </location>
</feature>
<organism>
    <name type="scientific">Pongo abelii</name>
    <name type="common">Sumatran orangutan</name>
    <name type="synonym">Pongo pygmaeus abelii</name>
    <dbReference type="NCBI Taxonomy" id="9601"/>
    <lineage>
        <taxon>Eukaryota</taxon>
        <taxon>Metazoa</taxon>
        <taxon>Chordata</taxon>
        <taxon>Craniata</taxon>
        <taxon>Vertebrata</taxon>
        <taxon>Euteleostomi</taxon>
        <taxon>Mammalia</taxon>
        <taxon>Eutheria</taxon>
        <taxon>Euarchontoglires</taxon>
        <taxon>Primates</taxon>
        <taxon>Haplorrhini</taxon>
        <taxon>Catarrhini</taxon>
        <taxon>Hominidae</taxon>
        <taxon>Pongo</taxon>
    </lineage>
</organism>
<accession>Q5RAP9</accession>